<dbReference type="EMBL" id="AB037824">
    <property type="protein sequence ID" value="BAA92641.1"/>
    <property type="status" value="ALT_INIT"/>
    <property type="molecule type" value="mRNA"/>
</dbReference>
<dbReference type="EMBL" id="AK022794">
    <property type="protein sequence ID" value="BAB14247.1"/>
    <property type="molecule type" value="mRNA"/>
</dbReference>
<dbReference type="EMBL" id="AC016134">
    <property type="status" value="NOT_ANNOTATED_CDS"/>
    <property type="molecule type" value="Genomic_DNA"/>
</dbReference>
<dbReference type="EMBL" id="BC000246">
    <property type="protein sequence ID" value="AAH00246.2"/>
    <property type="molecule type" value="mRNA"/>
</dbReference>
<dbReference type="EMBL" id="AL117479">
    <property type="protein sequence ID" value="CAB55952.1"/>
    <property type="molecule type" value="mRNA"/>
</dbReference>
<dbReference type="EMBL" id="AL157487">
    <property type="protein sequence ID" value="CAB75675.2"/>
    <property type="molecule type" value="mRNA"/>
</dbReference>
<dbReference type="CCDS" id="CCDS10079.1">
    <molecule id="Q9BWH6-1"/>
</dbReference>
<dbReference type="PIR" id="T17262">
    <property type="entry name" value="T17262"/>
</dbReference>
<dbReference type="PIR" id="T46928">
    <property type="entry name" value="T46928"/>
</dbReference>
<dbReference type="RefSeq" id="NP_056355.2">
    <molecule id="Q9BWH6-1"/>
    <property type="nucleotide sequence ID" value="NM_015540.3"/>
</dbReference>
<dbReference type="RefSeq" id="XP_005254354.1">
    <molecule id="Q9BWH6-1"/>
    <property type="nucleotide sequence ID" value="XM_005254297.2"/>
</dbReference>
<dbReference type="SMR" id="Q9BWH6"/>
<dbReference type="BioGRID" id="117487">
    <property type="interactions" value="134"/>
</dbReference>
<dbReference type="CORUM" id="Q9BWH6"/>
<dbReference type="FunCoup" id="Q9BWH6">
    <property type="interactions" value="2606"/>
</dbReference>
<dbReference type="IntAct" id="Q9BWH6">
    <property type="interactions" value="45"/>
</dbReference>
<dbReference type="MINT" id="Q9BWH6"/>
<dbReference type="STRING" id="9606.ENSP00000306123"/>
<dbReference type="GlyGen" id="Q9BWH6">
    <property type="glycosylation" value="5 sites, 1 O-linked glycan (1 site)"/>
</dbReference>
<dbReference type="iPTMnet" id="Q9BWH6"/>
<dbReference type="MetOSite" id="Q9BWH6"/>
<dbReference type="PhosphoSitePlus" id="Q9BWH6"/>
<dbReference type="BioMuta" id="RPAP1"/>
<dbReference type="DMDM" id="296452978"/>
<dbReference type="jPOST" id="Q9BWH6"/>
<dbReference type="MassIVE" id="Q9BWH6"/>
<dbReference type="PaxDb" id="9606-ENSP00000306123"/>
<dbReference type="PeptideAtlas" id="Q9BWH6"/>
<dbReference type="ProteomicsDB" id="79279">
    <molecule id="Q9BWH6-1"/>
</dbReference>
<dbReference type="ProteomicsDB" id="79280">
    <molecule id="Q9BWH6-2"/>
</dbReference>
<dbReference type="ProteomicsDB" id="79281">
    <molecule id="Q9BWH6-3"/>
</dbReference>
<dbReference type="Pumba" id="Q9BWH6"/>
<dbReference type="Antibodypedia" id="42079">
    <property type="antibodies" value="124 antibodies from 25 providers"/>
</dbReference>
<dbReference type="DNASU" id="26015"/>
<dbReference type="Ensembl" id="ENST00000304330.9">
    <molecule id="Q9BWH6-1"/>
    <property type="protein sequence ID" value="ENSP00000306123.4"/>
    <property type="gene ID" value="ENSG00000103932.12"/>
</dbReference>
<dbReference type="Ensembl" id="ENST00000562303.5">
    <molecule id="Q9BWH6-2"/>
    <property type="protein sequence ID" value="ENSP00000455363.1"/>
    <property type="gene ID" value="ENSG00000103932.12"/>
</dbReference>
<dbReference type="GeneID" id="26015"/>
<dbReference type="KEGG" id="hsa:26015"/>
<dbReference type="MANE-Select" id="ENST00000304330.9">
    <property type="protein sequence ID" value="ENSP00000306123.4"/>
    <property type="RefSeq nucleotide sequence ID" value="NM_015540.4"/>
    <property type="RefSeq protein sequence ID" value="NP_056355.2"/>
</dbReference>
<dbReference type="UCSC" id="uc001zod.5">
    <molecule id="Q9BWH6-1"/>
    <property type="organism name" value="human"/>
</dbReference>
<dbReference type="AGR" id="HGNC:24567"/>
<dbReference type="CTD" id="26015"/>
<dbReference type="DisGeNET" id="26015"/>
<dbReference type="GeneCards" id="RPAP1"/>
<dbReference type="HGNC" id="HGNC:24567">
    <property type="gene designation" value="RPAP1"/>
</dbReference>
<dbReference type="HPA" id="ENSG00000103932">
    <property type="expression patterns" value="Low tissue specificity"/>
</dbReference>
<dbReference type="MIM" id="611475">
    <property type="type" value="gene"/>
</dbReference>
<dbReference type="neXtProt" id="NX_Q9BWH6"/>
<dbReference type="OpenTargets" id="ENSG00000103932"/>
<dbReference type="PharmGKB" id="PA134914340"/>
<dbReference type="VEuPathDB" id="HostDB:ENSG00000103932"/>
<dbReference type="eggNOG" id="KOG1894">
    <property type="taxonomic scope" value="Eukaryota"/>
</dbReference>
<dbReference type="eggNOG" id="KOG4732">
    <property type="taxonomic scope" value="Eukaryota"/>
</dbReference>
<dbReference type="GeneTree" id="ENSGT00390000007594"/>
<dbReference type="HOGENOM" id="CLU_005296_1_0_1"/>
<dbReference type="InParanoid" id="Q9BWH6"/>
<dbReference type="OMA" id="KYFLQCV"/>
<dbReference type="OrthoDB" id="348201at2759"/>
<dbReference type="PAN-GO" id="Q9BWH6">
    <property type="GO annotations" value="1 GO annotation based on evolutionary models"/>
</dbReference>
<dbReference type="PhylomeDB" id="Q9BWH6"/>
<dbReference type="TreeFam" id="TF324391"/>
<dbReference type="PathwayCommons" id="Q9BWH6"/>
<dbReference type="SignaLink" id="Q9BWH6"/>
<dbReference type="BioGRID-ORCS" id="26015">
    <property type="hits" value="781 hits in 1169 CRISPR screens"/>
</dbReference>
<dbReference type="ChiTaRS" id="RPAP1">
    <property type="organism name" value="human"/>
</dbReference>
<dbReference type="GenomeRNAi" id="26015"/>
<dbReference type="Pharos" id="Q9BWH6">
    <property type="development level" value="Tbio"/>
</dbReference>
<dbReference type="PRO" id="PR:Q9BWH6"/>
<dbReference type="Proteomes" id="UP000005640">
    <property type="component" value="Chromosome 15"/>
</dbReference>
<dbReference type="RNAct" id="Q9BWH6">
    <property type="molecule type" value="protein"/>
</dbReference>
<dbReference type="Bgee" id="ENSG00000103932">
    <property type="expression patterns" value="Expressed in hindlimb stylopod muscle and 124 other cell types or tissues"/>
</dbReference>
<dbReference type="ExpressionAtlas" id="Q9BWH6">
    <property type="expression patterns" value="baseline and differential"/>
</dbReference>
<dbReference type="GO" id="GO:0000428">
    <property type="term" value="C:DNA-directed RNA polymerase complex"/>
    <property type="evidence" value="ECO:0007669"/>
    <property type="project" value="UniProtKB-KW"/>
</dbReference>
<dbReference type="GO" id="GO:0005634">
    <property type="term" value="C:nucleus"/>
    <property type="evidence" value="ECO:0007669"/>
    <property type="project" value="UniProtKB-SubCell"/>
</dbReference>
<dbReference type="GO" id="GO:0003677">
    <property type="term" value="F:DNA binding"/>
    <property type="evidence" value="ECO:0007669"/>
    <property type="project" value="UniProtKB-KW"/>
</dbReference>
<dbReference type="GO" id="GO:0016779">
    <property type="term" value="F:nucleotidyltransferase activity"/>
    <property type="evidence" value="ECO:0007669"/>
    <property type="project" value="UniProtKB-KW"/>
</dbReference>
<dbReference type="GO" id="GO:0006366">
    <property type="term" value="P:transcription by RNA polymerase II"/>
    <property type="evidence" value="ECO:0007669"/>
    <property type="project" value="InterPro"/>
</dbReference>
<dbReference type="InterPro" id="IPR013929">
    <property type="entry name" value="RNA_pol_II_AP1_C"/>
</dbReference>
<dbReference type="InterPro" id="IPR013930">
    <property type="entry name" value="RNA_pol_II_AP1_N"/>
</dbReference>
<dbReference type="InterPro" id="IPR039913">
    <property type="entry name" value="RPAP1/Rba50"/>
</dbReference>
<dbReference type="PANTHER" id="PTHR21483">
    <property type="entry name" value="RNA POLYMERASE II-ASSOCIATED PROTEIN 1"/>
    <property type="match status" value="1"/>
</dbReference>
<dbReference type="PANTHER" id="PTHR21483:SF18">
    <property type="entry name" value="RNA POLYMERASE II-ASSOCIATED PROTEIN 1"/>
    <property type="match status" value="1"/>
</dbReference>
<dbReference type="Pfam" id="PF08620">
    <property type="entry name" value="RPAP1_C"/>
    <property type="match status" value="1"/>
</dbReference>
<dbReference type="Pfam" id="PF08621">
    <property type="entry name" value="RPAP1_N"/>
    <property type="match status" value="1"/>
</dbReference>
<gene>
    <name type="primary">RPAP1</name>
    <name type="synonym">KIAA1403</name>
</gene>
<reference key="1">
    <citation type="journal article" date="2000" name="DNA Res.">
        <title>Prediction of the coding sequences of unidentified human genes. XVI. The complete sequences of 150 new cDNA clones from brain which code for large proteins in vitro.</title>
        <authorList>
            <person name="Nagase T."/>
            <person name="Kikuno R."/>
            <person name="Ishikawa K."/>
            <person name="Hirosawa M."/>
            <person name="Ohara O."/>
        </authorList>
    </citation>
    <scope>NUCLEOTIDE SEQUENCE [LARGE SCALE MRNA] (ISOFORM 2)</scope>
    <scope>VARIANTS LYS-506 AND GLU-825</scope>
    <source>
        <tissue>Brain</tissue>
    </source>
</reference>
<reference key="2">
    <citation type="journal article" date="2002" name="DNA Res.">
        <title>Construction of expression-ready cDNA clones for KIAA genes: manual curation of 330 KIAA cDNA clones.</title>
        <authorList>
            <person name="Nakajima D."/>
            <person name="Okazaki N."/>
            <person name="Yamakawa H."/>
            <person name="Kikuno R."/>
            <person name="Ohara O."/>
            <person name="Nagase T."/>
        </authorList>
    </citation>
    <scope>SEQUENCE REVISION</scope>
</reference>
<reference key="3">
    <citation type="journal article" date="2004" name="Nat. Genet.">
        <title>Complete sequencing and characterization of 21,243 full-length human cDNAs.</title>
        <authorList>
            <person name="Ota T."/>
            <person name="Suzuki Y."/>
            <person name="Nishikawa T."/>
            <person name="Otsuki T."/>
            <person name="Sugiyama T."/>
            <person name="Irie R."/>
            <person name="Wakamatsu A."/>
            <person name="Hayashi K."/>
            <person name="Sato H."/>
            <person name="Nagai K."/>
            <person name="Kimura K."/>
            <person name="Makita H."/>
            <person name="Sekine M."/>
            <person name="Obayashi M."/>
            <person name="Nishi T."/>
            <person name="Shibahara T."/>
            <person name="Tanaka T."/>
            <person name="Ishii S."/>
            <person name="Yamamoto J."/>
            <person name="Saito K."/>
            <person name="Kawai Y."/>
            <person name="Isono Y."/>
            <person name="Nakamura Y."/>
            <person name="Nagahari K."/>
            <person name="Murakami K."/>
            <person name="Yasuda T."/>
            <person name="Iwayanagi T."/>
            <person name="Wagatsuma M."/>
            <person name="Shiratori A."/>
            <person name="Sudo H."/>
            <person name="Hosoiri T."/>
            <person name="Kaku Y."/>
            <person name="Kodaira H."/>
            <person name="Kondo H."/>
            <person name="Sugawara M."/>
            <person name="Takahashi M."/>
            <person name="Kanda K."/>
            <person name="Yokoi T."/>
            <person name="Furuya T."/>
            <person name="Kikkawa E."/>
            <person name="Omura Y."/>
            <person name="Abe K."/>
            <person name="Kamihara K."/>
            <person name="Katsuta N."/>
            <person name="Sato K."/>
            <person name="Tanikawa M."/>
            <person name="Yamazaki M."/>
            <person name="Ninomiya K."/>
            <person name="Ishibashi T."/>
            <person name="Yamashita H."/>
            <person name="Murakawa K."/>
            <person name="Fujimori K."/>
            <person name="Tanai H."/>
            <person name="Kimata M."/>
            <person name="Watanabe M."/>
            <person name="Hiraoka S."/>
            <person name="Chiba Y."/>
            <person name="Ishida S."/>
            <person name="Ono Y."/>
            <person name="Takiguchi S."/>
            <person name="Watanabe S."/>
            <person name="Yosida M."/>
            <person name="Hotuta T."/>
            <person name="Kusano J."/>
            <person name="Kanehori K."/>
            <person name="Takahashi-Fujii A."/>
            <person name="Hara H."/>
            <person name="Tanase T.-O."/>
            <person name="Nomura Y."/>
            <person name="Togiya S."/>
            <person name="Komai F."/>
            <person name="Hara R."/>
            <person name="Takeuchi K."/>
            <person name="Arita M."/>
            <person name="Imose N."/>
            <person name="Musashino K."/>
            <person name="Yuuki H."/>
            <person name="Oshima A."/>
            <person name="Sasaki N."/>
            <person name="Aotsuka S."/>
            <person name="Yoshikawa Y."/>
            <person name="Matsunawa H."/>
            <person name="Ichihara T."/>
            <person name="Shiohata N."/>
            <person name="Sano S."/>
            <person name="Moriya S."/>
            <person name="Momiyama H."/>
            <person name="Satoh N."/>
            <person name="Takami S."/>
            <person name="Terashima Y."/>
            <person name="Suzuki O."/>
            <person name="Nakagawa S."/>
            <person name="Senoh A."/>
            <person name="Mizoguchi H."/>
            <person name="Goto Y."/>
            <person name="Shimizu F."/>
            <person name="Wakebe H."/>
            <person name="Hishigaki H."/>
            <person name="Watanabe T."/>
            <person name="Sugiyama A."/>
            <person name="Takemoto M."/>
            <person name="Kawakami B."/>
            <person name="Yamazaki M."/>
            <person name="Watanabe K."/>
            <person name="Kumagai A."/>
            <person name="Itakura S."/>
            <person name="Fukuzumi Y."/>
            <person name="Fujimori Y."/>
            <person name="Komiyama M."/>
            <person name="Tashiro H."/>
            <person name="Tanigami A."/>
            <person name="Fujiwara T."/>
            <person name="Ono T."/>
            <person name="Yamada K."/>
            <person name="Fujii Y."/>
            <person name="Ozaki K."/>
            <person name="Hirao M."/>
            <person name="Ohmori Y."/>
            <person name="Kawabata A."/>
            <person name="Hikiji T."/>
            <person name="Kobatake N."/>
            <person name="Inagaki H."/>
            <person name="Ikema Y."/>
            <person name="Okamoto S."/>
            <person name="Okitani R."/>
            <person name="Kawakami T."/>
            <person name="Noguchi S."/>
            <person name="Itoh T."/>
            <person name="Shigeta K."/>
            <person name="Senba T."/>
            <person name="Matsumura K."/>
            <person name="Nakajima Y."/>
            <person name="Mizuno T."/>
            <person name="Morinaga M."/>
            <person name="Sasaki M."/>
            <person name="Togashi T."/>
            <person name="Oyama M."/>
            <person name="Hata H."/>
            <person name="Watanabe M."/>
            <person name="Komatsu T."/>
            <person name="Mizushima-Sugano J."/>
            <person name="Satoh T."/>
            <person name="Shirai Y."/>
            <person name="Takahashi Y."/>
            <person name="Nakagawa K."/>
            <person name="Okumura K."/>
            <person name="Nagase T."/>
            <person name="Nomura N."/>
            <person name="Kikuchi H."/>
            <person name="Masuho Y."/>
            <person name="Yamashita R."/>
            <person name="Nakai K."/>
            <person name="Yada T."/>
            <person name="Nakamura Y."/>
            <person name="Ohara O."/>
            <person name="Isogai T."/>
            <person name="Sugano S."/>
        </authorList>
    </citation>
    <scope>NUCLEOTIDE SEQUENCE [LARGE SCALE MRNA] (ISOFORM 3)</scope>
    <scope>VARIANT GLU-825</scope>
    <source>
        <tissue>Teratocarcinoma</tissue>
    </source>
</reference>
<reference key="4">
    <citation type="journal article" date="2006" name="Nature">
        <title>Analysis of the DNA sequence and duplication history of human chromosome 15.</title>
        <authorList>
            <person name="Zody M.C."/>
            <person name="Garber M."/>
            <person name="Sharpe T."/>
            <person name="Young S.K."/>
            <person name="Rowen L."/>
            <person name="O'Neill K."/>
            <person name="Whittaker C.A."/>
            <person name="Kamal M."/>
            <person name="Chang J.L."/>
            <person name="Cuomo C.A."/>
            <person name="Dewar K."/>
            <person name="FitzGerald M.G."/>
            <person name="Kodira C.D."/>
            <person name="Madan A."/>
            <person name="Qin S."/>
            <person name="Yang X."/>
            <person name="Abbasi N."/>
            <person name="Abouelleil A."/>
            <person name="Arachchi H.M."/>
            <person name="Baradarani L."/>
            <person name="Birditt B."/>
            <person name="Bloom S."/>
            <person name="Bloom T."/>
            <person name="Borowsky M.L."/>
            <person name="Burke J."/>
            <person name="Butler J."/>
            <person name="Cook A."/>
            <person name="DeArellano K."/>
            <person name="DeCaprio D."/>
            <person name="Dorris L. III"/>
            <person name="Dors M."/>
            <person name="Eichler E.E."/>
            <person name="Engels R."/>
            <person name="Fahey J."/>
            <person name="Fleetwood P."/>
            <person name="Friedman C."/>
            <person name="Gearin G."/>
            <person name="Hall J.L."/>
            <person name="Hensley G."/>
            <person name="Johnson E."/>
            <person name="Jones C."/>
            <person name="Kamat A."/>
            <person name="Kaur A."/>
            <person name="Locke D.P."/>
            <person name="Madan A."/>
            <person name="Munson G."/>
            <person name="Jaffe D.B."/>
            <person name="Lui A."/>
            <person name="Macdonald P."/>
            <person name="Mauceli E."/>
            <person name="Naylor J.W."/>
            <person name="Nesbitt R."/>
            <person name="Nicol R."/>
            <person name="O'Leary S.B."/>
            <person name="Ratcliffe A."/>
            <person name="Rounsley S."/>
            <person name="She X."/>
            <person name="Sneddon K.M.B."/>
            <person name="Stewart S."/>
            <person name="Sougnez C."/>
            <person name="Stone S.M."/>
            <person name="Topham K."/>
            <person name="Vincent D."/>
            <person name="Wang S."/>
            <person name="Zimmer A.R."/>
            <person name="Birren B.W."/>
            <person name="Hood L."/>
            <person name="Lander E.S."/>
            <person name="Nusbaum C."/>
        </authorList>
    </citation>
    <scope>NUCLEOTIDE SEQUENCE [LARGE SCALE GENOMIC DNA]</scope>
</reference>
<reference key="5">
    <citation type="journal article" date="2004" name="Genome Res.">
        <title>The status, quality, and expansion of the NIH full-length cDNA project: the Mammalian Gene Collection (MGC).</title>
        <authorList>
            <consortium name="The MGC Project Team"/>
        </authorList>
    </citation>
    <scope>NUCLEOTIDE SEQUENCE [LARGE SCALE MRNA] (ISOFORM 1)</scope>
    <scope>VARIANTS LYS-506 AND GLU-825</scope>
    <source>
        <tissue>Eye</tissue>
    </source>
</reference>
<reference key="6">
    <citation type="journal article" date="2007" name="BMC Genomics">
        <title>The full-ORF clone resource of the German cDNA consortium.</title>
        <authorList>
            <person name="Bechtel S."/>
            <person name="Rosenfelder H."/>
            <person name="Duda A."/>
            <person name="Schmidt C.P."/>
            <person name="Ernst U."/>
            <person name="Wellenreuther R."/>
            <person name="Mehrle A."/>
            <person name="Schuster C."/>
            <person name="Bahr A."/>
            <person name="Bloecker H."/>
            <person name="Heubner D."/>
            <person name="Hoerlein A."/>
            <person name="Michel G."/>
            <person name="Wedler H."/>
            <person name="Koehrer K."/>
            <person name="Ottenwaelder B."/>
            <person name="Poustka A."/>
            <person name="Wiemann S."/>
            <person name="Schupp I."/>
        </authorList>
    </citation>
    <scope>NUCLEOTIDE SEQUENCE [LARGE SCALE MRNA] OF 761-1393</scope>
    <scope>VARIANT GLU-825</scope>
    <source>
        <tissue>Mammary cancer</tissue>
        <tissue>Testis</tissue>
    </source>
</reference>
<reference key="7">
    <citation type="journal article" date="2004" name="Mol. Cell. Biol.">
        <title>RPAP1, a novel human RNA polymerase II-associated protein affinity purified with recombinant wild-type and mutated polymerase subunits.</title>
        <authorList>
            <person name="Jeronimo C."/>
            <person name="Langelier M.-F."/>
            <person name="Zeghouf M."/>
            <person name="Cojocaru M."/>
            <person name="Bergeron D."/>
            <person name="Baali D."/>
            <person name="Forget D."/>
            <person name="Mnaimneh S."/>
            <person name="Davierwala A.P."/>
            <person name="Pootoolal J."/>
            <person name="Chandy M."/>
            <person name="Canadien V."/>
            <person name="Beattie B.K."/>
            <person name="Richards D.P."/>
            <person name="Workman J.L."/>
            <person name="Hughes T.R."/>
            <person name="Greenblatt J."/>
            <person name="Coulombe B."/>
        </authorList>
    </citation>
    <scope>IDENTIFICATION IN THE RNA POLYMERASE II COMPLEX</scope>
</reference>
<reference key="8">
    <citation type="journal article" date="2007" name="Mol. Cell">
        <title>Systematic analysis of the protein interaction network for the human transcription machinery reveals the identity of the 7SK capping enzyme.</title>
        <authorList>
            <person name="Jeronimo C."/>
            <person name="Forget D."/>
            <person name="Bouchard A."/>
            <person name="Li Q."/>
            <person name="Chua G."/>
            <person name="Poitras C."/>
            <person name="Therien C."/>
            <person name="Bergeron D."/>
            <person name="Bourassa S."/>
            <person name="Greenblatt J."/>
            <person name="Chabot B."/>
            <person name="Poirier G.G."/>
            <person name="Hughes T.R."/>
            <person name="Blanchette M."/>
            <person name="Price D.H."/>
            <person name="Coulombe B."/>
        </authorList>
    </citation>
    <scope>FUNCTION</scope>
    <scope>IDENTIFICATION BY MASS SPECTROMETRY</scope>
    <scope>IDENTIFICATION IN THE RNA POLYMERASE II COMPLEX</scope>
</reference>
<reference key="9">
    <citation type="journal article" date="2008" name="Mol. Cell">
        <title>Kinase-selective enrichment enables quantitative phosphoproteomics of the kinome across the cell cycle.</title>
        <authorList>
            <person name="Daub H."/>
            <person name="Olsen J.V."/>
            <person name="Bairlein M."/>
            <person name="Gnad F."/>
            <person name="Oppermann F.S."/>
            <person name="Korner R."/>
            <person name="Greff Z."/>
            <person name="Keri G."/>
            <person name="Stemmann O."/>
            <person name="Mann M."/>
        </authorList>
    </citation>
    <scope>PHOSPHORYLATION [LARGE SCALE ANALYSIS] AT SER-72</scope>
    <scope>IDENTIFICATION BY MASS SPECTROMETRY [LARGE SCALE ANALYSIS]</scope>
    <source>
        <tissue>Cervix carcinoma</tissue>
    </source>
</reference>
<reference key="10">
    <citation type="journal article" date="2009" name="Anal. Chem.">
        <title>Lys-N and trypsin cover complementary parts of the phosphoproteome in a refined SCX-based approach.</title>
        <authorList>
            <person name="Gauci S."/>
            <person name="Helbig A.O."/>
            <person name="Slijper M."/>
            <person name="Krijgsveld J."/>
            <person name="Heck A.J."/>
            <person name="Mohammed S."/>
        </authorList>
    </citation>
    <scope>IDENTIFICATION BY MASS SPECTROMETRY [LARGE SCALE ANALYSIS]</scope>
</reference>
<reference key="11">
    <citation type="journal article" date="2010" name="Sci. Signal.">
        <title>Quantitative phosphoproteomics reveals widespread full phosphorylation site occupancy during mitosis.</title>
        <authorList>
            <person name="Olsen J.V."/>
            <person name="Vermeulen M."/>
            <person name="Santamaria A."/>
            <person name="Kumar C."/>
            <person name="Miller M.L."/>
            <person name="Jensen L.J."/>
            <person name="Gnad F."/>
            <person name="Cox J."/>
            <person name="Jensen T.S."/>
            <person name="Nigg E.A."/>
            <person name="Brunak S."/>
            <person name="Mann M."/>
        </authorList>
    </citation>
    <scope>PHOSPHORYLATION [LARGE SCALE ANALYSIS] AT THR-321</scope>
    <scope>IDENTIFICATION BY MASS SPECTROMETRY [LARGE SCALE ANALYSIS]</scope>
    <source>
        <tissue>Cervix carcinoma</tissue>
    </source>
</reference>
<reference key="12">
    <citation type="journal article" date="2011" name="BMC Syst. Biol.">
        <title>Initial characterization of the human central proteome.</title>
        <authorList>
            <person name="Burkard T.R."/>
            <person name="Planyavsky M."/>
            <person name="Kaupe I."/>
            <person name="Breitwieser F.P."/>
            <person name="Buerckstuemmer T."/>
            <person name="Bennett K.L."/>
            <person name="Superti-Furga G."/>
            <person name="Colinge J."/>
        </authorList>
    </citation>
    <scope>IDENTIFICATION BY MASS SPECTROMETRY [LARGE SCALE ANALYSIS]</scope>
</reference>
<reference key="13">
    <citation type="journal article" date="2013" name="J. Proteome Res.">
        <title>Toward a comprehensive characterization of a human cancer cell phosphoproteome.</title>
        <authorList>
            <person name="Zhou H."/>
            <person name="Di Palma S."/>
            <person name="Preisinger C."/>
            <person name="Peng M."/>
            <person name="Polat A.N."/>
            <person name="Heck A.J."/>
            <person name="Mohammed S."/>
        </authorList>
    </citation>
    <scope>PHOSPHORYLATION [LARGE SCALE ANALYSIS] AT SER-72; THR-321 AND SER-1121</scope>
    <scope>IDENTIFICATION BY MASS SPECTROMETRY [LARGE SCALE ANALYSIS]</scope>
    <source>
        <tissue>Cervix carcinoma</tissue>
        <tissue>Erythroleukemia</tissue>
    </source>
</reference>
<reference key="14">
    <citation type="journal article" date="2014" name="J. Proteomics">
        <title>An enzyme assisted RP-RPLC approach for in-depth analysis of human liver phosphoproteome.</title>
        <authorList>
            <person name="Bian Y."/>
            <person name="Song C."/>
            <person name="Cheng K."/>
            <person name="Dong M."/>
            <person name="Wang F."/>
            <person name="Huang J."/>
            <person name="Sun D."/>
            <person name="Wang L."/>
            <person name="Ye M."/>
            <person name="Zou H."/>
        </authorList>
    </citation>
    <scope>IDENTIFICATION BY MASS SPECTROMETRY [LARGE SCALE ANALYSIS]</scope>
    <source>
        <tissue>Liver</tissue>
    </source>
</reference>
<reference key="15">
    <citation type="journal article" date="2006" name="Science">
        <title>The consensus coding sequences of human breast and colorectal cancers.</title>
        <authorList>
            <person name="Sjoeblom T."/>
            <person name="Jones S."/>
            <person name="Wood L.D."/>
            <person name="Parsons D.W."/>
            <person name="Lin J."/>
            <person name="Barber T.D."/>
            <person name="Mandelker D."/>
            <person name="Leary R.J."/>
            <person name="Ptak J."/>
            <person name="Silliman N."/>
            <person name="Szabo S."/>
            <person name="Buckhaults P."/>
            <person name="Farrell C."/>
            <person name="Meeh P."/>
            <person name="Markowitz S.D."/>
            <person name="Willis J."/>
            <person name="Dawson D."/>
            <person name="Willson J.K.V."/>
            <person name="Gazdar A.F."/>
            <person name="Hartigan J."/>
            <person name="Wu L."/>
            <person name="Liu C."/>
            <person name="Parmigiani G."/>
            <person name="Park B.H."/>
            <person name="Bachman K.E."/>
            <person name="Papadopoulos N."/>
            <person name="Vogelstein B."/>
            <person name="Kinzler K.W."/>
            <person name="Velculescu V.E."/>
        </authorList>
    </citation>
    <scope>VARIANT [LARGE SCALE ANALYSIS] GLN-525</scope>
</reference>
<keyword id="KW-0025">Alternative splicing</keyword>
<keyword id="KW-0238">DNA-binding</keyword>
<keyword id="KW-0240">DNA-directed RNA polymerase</keyword>
<keyword id="KW-0548">Nucleotidyltransferase</keyword>
<keyword id="KW-0539">Nucleus</keyword>
<keyword id="KW-0597">Phosphoprotein</keyword>
<keyword id="KW-1267">Proteomics identification</keyword>
<keyword id="KW-1185">Reference proteome</keyword>
<keyword id="KW-0804">Transcription</keyword>
<keyword id="KW-0808">Transferase</keyword>
<protein>
    <recommendedName>
        <fullName>RNA polymerase II-associated protein 1</fullName>
    </recommendedName>
</protein>
<feature type="chain" id="PRO_0000284841" description="RNA polymerase II-associated protein 1">
    <location>
        <begin position="1"/>
        <end position="1393"/>
    </location>
</feature>
<feature type="region of interest" description="Disordered" evidence="2">
    <location>
        <begin position="34"/>
        <end position="53"/>
    </location>
</feature>
<feature type="region of interest" description="Disordered" evidence="2">
    <location>
        <begin position="61"/>
        <end position="94"/>
    </location>
</feature>
<feature type="region of interest" description="Disordered" evidence="2">
    <location>
        <begin position="266"/>
        <end position="295"/>
    </location>
</feature>
<feature type="region of interest" description="Disordered" evidence="2">
    <location>
        <begin position="496"/>
        <end position="531"/>
    </location>
</feature>
<feature type="compositionally biased region" description="Pro residues" evidence="2">
    <location>
        <begin position="64"/>
        <end position="74"/>
    </location>
</feature>
<feature type="compositionally biased region" description="Acidic residues" evidence="2">
    <location>
        <begin position="500"/>
        <end position="510"/>
    </location>
</feature>
<feature type="compositionally biased region" description="Basic and acidic residues" evidence="2">
    <location>
        <begin position="518"/>
        <end position="531"/>
    </location>
</feature>
<feature type="modified residue" description="Phosphoserine" evidence="13 15">
    <location>
        <position position="72"/>
    </location>
</feature>
<feature type="modified residue" description="Phosphothreonine" evidence="14 15">
    <location>
        <position position="321"/>
    </location>
</feature>
<feature type="modified residue" description="Phosphoserine" evidence="15">
    <location>
        <position position="1121"/>
    </location>
</feature>
<feature type="splice variant" id="VSP_024679" description="In isoform 3." evidence="11">
    <location>
        <begin position="1"/>
        <end position="621"/>
    </location>
</feature>
<feature type="splice variant" id="VSP_024680" description="In isoform 2." evidence="10">
    <original>LPVSLECYTVPPEDNLALLQLYFRTLVTGALRPRWCPVLYA</original>
    <variation>VLSQPSRTCKGTLHWASGAVLSLEELWKTSASSSYLLGALRGLRESMKRA</variation>
    <location>
        <begin position="1266"/>
        <end position="1306"/>
    </location>
</feature>
<feature type="splice variant" id="VSP_024681" description="In isoform 2." evidence="10">
    <location>
        <begin position="1307"/>
        <end position="1393"/>
    </location>
</feature>
<feature type="sequence variant" id="VAR_057738" description="In dbSNP:rs2297382.">
    <original>K</original>
    <variation>M</variation>
    <location>
        <position position="165"/>
    </location>
</feature>
<feature type="sequence variant" id="VAR_057739" description="In dbSNP:rs2289741.">
    <original>R</original>
    <variation>Q</variation>
    <location>
        <position position="429"/>
    </location>
</feature>
<feature type="sequence variant" id="VAR_060348" description="In dbSNP:rs1200345." evidence="3 6">
    <original>E</original>
    <variation>K</variation>
    <location>
        <position position="506"/>
    </location>
</feature>
<feature type="sequence variant" id="VAR_036469" description="In a colorectal cancer sample; somatic mutation; dbSNP:rs372712659." evidence="7">
    <original>R</original>
    <variation>Q</variation>
    <location>
        <position position="525"/>
    </location>
</feature>
<feature type="sequence variant" id="VAR_057740" description="In dbSNP:rs11630901.">
    <original>R</original>
    <variation>G</variation>
    <location>
        <position position="582"/>
    </location>
</feature>
<feature type="sequence variant" id="VAR_060349" description="In dbSNP:rs8027526." evidence="3 4 6 9">
    <original>Q</original>
    <variation>E</variation>
    <location>
        <position position="825"/>
    </location>
</feature>
<feature type="sequence variant" id="VAR_060350" description="In dbSNP:rs7170898.">
    <original>R</original>
    <variation>G</variation>
    <location>
        <position position="1108"/>
    </location>
</feature>
<feature type="sequence conflict" description="In Ref. 3; BAB14247." evidence="12" ref="3">
    <original>T</original>
    <variation>A</variation>
    <location>
        <position position="760"/>
    </location>
</feature>
<sequence>MLSRPKPGESEVDLLHFQSQFLAAGAAPAVQLVKKGNRGGGDANSDRPPLQDHRDVVMLDNLPDLPPALVPSPPKRARPSPGHCLPEDEDPEERLRRHDQHITAVLTKIIERDTSSVAVNLPVPSGVAFPAVFLRSRDTQGKSATSGKRSIFAQEIAARRIAEAKGPSVGEVVPNVGPPEGAVTCETPTPRNQGCQLPGSSHSFQGPNLVTGKGLRDQEAEQEAQTIHEENIARLQAMAPEEILQEQQRLLAQLDPSLVAFLRSHSHTQEQTGETASEEQRPGGPSANVTKEEPLMSAFASEPRKRDKLEPEAPALALPVTPQKEWLHMDTVELEKLHWTQDLPPVRRQQTQERMQARFSLQGELLAPDVDLPTHLGLHHHGEEAERAGYSLQELFHLTRSQVSQQRALALHVLAQVISRAQAGEFGDRLAGSVLSLLLDAGFLFLLRFSLDDRVDGVIATAIRALRALLVAPGDEELLDSTFSWYHGALTFPLMPSQEDKEDEDEDEECPAGKAKRKSPEEESRPPPDLARHDVIKGLLATSLLPRLRYVLEVTYPGPAVVLDILAVLIRLARHSLESATRVLECPRLIETIVREFLPTSWSPVGAGPTPSLYKVPCATAMKLLRVLASAGRNIAARLLSSFDLRSRLCRIIAEAPQELALPPEEAEMLSTEALRLWAVAASYGQGGYLYRELYPVLMRALQVVPRELSTHPPQPLSMQRIASLLTLLTQLTLAAGSTPAETISDSAEASLSATPSLVTWTQVSGLQPLVEPCLRQTLKLLSRPEMWRAVGPVPVACLLFLGAYYQAWSQQPSSCPEDWLQDMQRLSEELLLPLLSQPTLGSLWDSLRHCSLLCNPLSCVPALEAPPSLVSLGCSGGCPRLSLAGSASPFPFLTALLSLLNTLAQIHKGLCGQLAAILAAPGLQNYFLQCVAPGAAPHLTPFSAWALRHEYHLQYLALALAQKAAALQPLPATHAALYHGMALALLSRLLPGSEYLTHELLLSCVFRLEFLPERTSGGPEAADFSDQLSLGSSRVPRCGQGTLLAQACQDLPSIRNCYLTHCSPARASLLASQALHRGELQRVPTLLLPMPTEPLLPTDWPFLPLIRLYHRASDTPSGLSPTDTMGTAMRVLQWVLVLESWRPQALWAVPPAARLARLMCVFLVDSELFRESPVQHLVAALLAQLCQPQVLPNLNLDCRLPGLTSFPDLYANFLDHFEAVSFGDHLFGALVLLPLQRRFSVTLRLALFGEHVGALRALSLPLTQLPVSLECYTVPPEDNLALLQLYFRTLVTGALRPRWCPVLYAVAVAHVNSFIFSQDPQSSDEVKAARRSMLQKTWLLADEGLRQHLLHYKLPNSTLPEGFELYSQLPPLRQHYLQRLTSTVLQNGVSET</sequence>
<name>RPAP1_HUMAN</name>
<accession>Q9BWH6</accession>
<accession>Q9H9I2</accession>
<accession>Q9NSQ5</accession>
<accession>Q9P2E4</accession>
<accession>Q9UFS7</accession>
<evidence type="ECO:0000250" key="1"/>
<evidence type="ECO:0000256" key="2">
    <source>
        <dbReference type="SAM" id="MobiDB-lite"/>
    </source>
</evidence>
<evidence type="ECO:0000269" key="3">
    <source>
    </source>
</evidence>
<evidence type="ECO:0000269" key="4">
    <source>
    </source>
</evidence>
<evidence type="ECO:0000269" key="5">
    <source>
    </source>
</evidence>
<evidence type="ECO:0000269" key="6">
    <source>
    </source>
</evidence>
<evidence type="ECO:0000269" key="7">
    <source>
    </source>
</evidence>
<evidence type="ECO:0000269" key="8">
    <source>
    </source>
</evidence>
<evidence type="ECO:0000269" key="9">
    <source>
    </source>
</evidence>
<evidence type="ECO:0000303" key="10">
    <source>
    </source>
</evidence>
<evidence type="ECO:0000303" key="11">
    <source>
    </source>
</evidence>
<evidence type="ECO:0000305" key="12"/>
<evidence type="ECO:0007744" key="13">
    <source>
    </source>
</evidence>
<evidence type="ECO:0007744" key="14">
    <source>
    </source>
</evidence>
<evidence type="ECO:0007744" key="15">
    <source>
    </source>
</evidence>
<proteinExistence type="evidence at protein level"/>
<organism>
    <name type="scientific">Homo sapiens</name>
    <name type="common">Human</name>
    <dbReference type="NCBI Taxonomy" id="9606"/>
    <lineage>
        <taxon>Eukaryota</taxon>
        <taxon>Metazoa</taxon>
        <taxon>Chordata</taxon>
        <taxon>Craniata</taxon>
        <taxon>Vertebrata</taxon>
        <taxon>Euteleostomi</taxon>
        <taxon>Mammalia</taxon>
        <taxon>Eutheria</taxon>
        <taxon>Euarchontoglires</taxon>
        <taxon>Primates</taxon>
        <taxon>Haplorrhini</taxon>
        <taxon>Catarrhini</taxon>
        <taxon>Hominidae</taxon>
        <taxon>Homo</taxon>
    </lineage>
</organism>
<comment type="function">
    <text evidence="8">Forms an interface between the RNA polymerase II enzyme and chaperone/scaffolding protein, suggesting that it is required to connect RNA polymerase II to regulators of protein complex formation. Required for interaction of the RNA polymerase II complex with acetylated histone H3.</text>
</comment>
<comment type="subunit">
    <text evidence="5 8">Part of an RNA polymerase II complex that contains POLR2A, POLR2B, POLR2C, POLR2D, POLR2E, POLR2F, POLR2G, POLR2H, POLR2I, POLR2J, POLR2K, POLR2L, RPAP1, FCP1 plus the general transcription factors TFIIB and TFIIF.</text>
</comment>
<comment type="interaction">
    <interactant intactId="EBI-1048085">
        <id>Q9BWH6</id>
    </interactant>
    <interactant intactId="EBI-359527">
        <id>P62875</id>
        <label>POLR2L</label>
    </interactant>
    <organismsDiffer>false</organismsDiffer>
    <experiments>5</experiments>
</comment>
<comment type="interaction">
    <interactant intactId="EBI-1048085">
        <id>Q9BWH6</id>
    </interactant>
    <interactant intactId="EBI-752420">
        <id>Q9NUX5</id>
        <label>POT1</label>
    </interactant>
    <organismsDiffer>false</organismsDiffer>
    <experiments>2</experiments>
</comment>
<comment type="subcellular location">
    <subcellularLocation>
        <location evidence="1">Nucleus</location>
    </subcellularLocation>
</comment>
<comment type="alternative products">
    <event type="alternative splicing"/>
    <isoform>
        <id>Q9BWH6-1</id>
        <name>1</name>
        <sequence type="displayed"/>
    </isoform>
    <isoform>
        <id>Q9BWH6-2</id>
        <name>2</name>
        <sequence type="described" ref="VSP_024680 VSP_024681"/>
    </isoform>
    <isoform>
        <id>Q9BWH6-3</id>
        <name>3</name>
        <sequence type="described" ref="VSP_024679"/>
    </isoform>
</comment>
<comment type="miscellaneous">
    <molecule>Isoform 2</molecule>
    <text evidence="12">May be produced at very low levels due to a premature stop codon in the mRNA, leading to nonsense-mediated mRNA decay.</text>
</comment>
<comment type="similarity">
    <text evidence="12">Belongs to the RPAP1 family.</text>
</comment>
<comment type="sequence caution" evidence="12">
    <conflict type="erroneous initiation">
        <sequence resource="EMBL-CDS" id="BAA92641"/>
    </conflict>
    <text>Extended N-terminus.</text>
</comment>